<gene>
    <name evidence="1" type="primary">rnmV</name>
    <name type="ordered locus">BA_0038</name>
    <name type="ordered locus">GBAA_0038</name>
    <name type="ordered locus">BAS0039</name>
</gene>
<proteinExistence type="inferred from homology"/>
<evidence type="ECO:0000255" key="1">
    <source>
        <dbReference type="HAMAP-Rule" id="MF_01469"/>
    </source>
</evidence>
<name>RNM5_BACAN</name>
<keyword id="KW-0963">Cytoplasm</keyword>
<keyword id="KW-0255">Endonuclease</keyword>
<keyword id="KW-0378">Hydrolase</keyword>
<keyword id="KW-0460">Magnesium</keyword>
<keyword id="KW-0479">Metal-binding</keyword>
<keyword id="KW-0540">Nuclease</keyword>
<keyword id="KW-1185">Reference proteome</keyword>
<keyword id="KW-0690">Ribosome biogenesis</keyword>
<keyword id="KW-0694">RNA-binding</keyword>
<keyword id="KW-0698">rRNA processing</keyword>
<keyword id="KW-0699">rRNA-binding</keyword>
<dbReference type="EC" id="3.1.26.8" evidence="1"/>
<dbReference type="EMBL" id="AE016879">
    <property type="protein sequence ID" value="AAP24093.1"/>
    <property type="molecule type" value="Genomic_DNA"/>
</dbReference>
<dbReference type="EMBL" id="AE017334">
    <property type="protein sequence ID" value="AAT29117.1"/>
    <property type="molecule type" value="Genomic_DNA"/>
</dbReference>
<dbReference type="EMBL" id="AE017225">
    <property type="protein sequence ID" value="AAT52377.1"/>
    <property type="molecule type" value="Genomic_DNA"/>
</dbReference>
<dbReference type="RefSeq" id="NP_842607.1">
    <property type="nucleotide sequence ID" value="NC_003997.3"/>
</dbReference>
<dbReference type="RefSeq" id="WP_000692830.1">
    <property type="nucleotide sequence ID" value="NZ_WXXJ01000001.1"/>
</dbReference>
<dbReference type="RefSeq" id="YP_026326.1">
    <property type="nucleotide sequence ID" value="NC_005945.1"/>
</dbReference>
<dbReference type="SMR" id="Q81W01"/>
<dbReference type="STRING" id="261594.GBAA_0038"/>
<dbReference type="DNASU" id="1083787"/>
<dbReference type="GeneID" id="93011030"/>
<dbReference type="KEGG" id="ban:BA_0038"/>
<dbReference type="KEGG" id="bar:GBAA_0038"/>
<dbReference type="KEGG" id="bat:BAS0039"/>
<dbReference type="PATRIC" id="fig|198094.11.peg.36"/>
<dbReference type="eggNOG" id="COG1658">
    <property type="taxonomic scope" value="Bacteria"/>
</dbReference>
<dbReference type="HOGENOM" id="CLU_109405_0_0_9"/>
<dbReference type="OMA" id="RLQMFQI"/>
<dbReference type="OrthoDB" id="9791329at2"/>
<dbReference type="Proteomes" id="UP000000427">
    <property type="component" value="Chromosome"/>
</dbReference>
<dbReference type="Proteomes" id="UP000000594">
    <property type="component" value="Chromosome"/>
</dbReference>
<dbReference type="GO" id="GO:0005737">
    <property type="term" value="C:cytoplasm"/>
    <property type="evidence" value="ECO:0007669"/>
    <property type="project" value="UniProtKB-SubCell"/>
</dbReference>
<dbReference type="GO" id="GO:0046872">
    <property type="term" value="F:metal ion binding"/>
    <property type="evidence" value="ECO:0007669"/>
    <property type="project" value="UniProtKB-KW"/>
</dbReference>
<dbReference type="GO" id="GO:0043822">
    <property type="term" value="F:ribonuclease M5 activity"/>
    <property type="evidence" value="ECO:0007669"/>
    <property type="project" value="UniProtKB-UniRule"/>
</dbReference>
<dbReference type="GO" id="GO:0019843">
    <property type="term" value="F:rRNA binding"/>
    <property type="evidence" value="ECO:0007669"/>
    <property type="project" value="UniProtKB-KW"/>
</dbReference>
<dbReference type="GO" id="GO:0006364">
    <property type="term" value="P:rRNA processing"/>
    <property type="evidence" value="ECO:0007669"/>
    <property type="project" value="UniProtKB-UniRule"/>
</dbReference>
<dbReference type="CDD" id="cd01027">
    <property type="entry name" value="TOPRIM_RNase_M5_like"/>
    <property type="match status" value="1"/>
</dbReference>
<dbReference type="FunFam" id="3.40.1360.10:FF:000006">
    <property type="entry name" value="Ribonuclease M5"/>
    <property type="match status" value="1"/>
</dbReference>
<dbReference type="Gene3D" id="3.40.1360.10">
    <property type="match status" value="1"/>
</dbReference>
<dbReference type="HAMAP" id="MF_01469">
    <property type="entry name" value="RNase_M5"/>
    <property type="match status" value="1"/>
</dbReference>
<dbReference type="InterPro" id="IPR004466">
    <property type="entry name" value="RNase_M5"/>
</dbReference>
<dbReference type="InterPro" id="IPR025156">
    <property type="entry name" value="RNase_M5_C"/>
</dbReference>
<dbReference type="InterPro" id="IPR006171">
    <property type="entry name" value="TOPRIM_dom"/>
</dbReference>
<dbReference type="InterPro" id="IPR034141">
    <property type="entry name" value="TOPRIM_RNase_M5-like"/>
</dbReference>
<dbReference type="NCBIfam" id="TIGR00334">
    <property type="entry name" value="5S_RNA_mat_M5"/>
    <property type="match status" value="1"/>
</dbReference>
<dbReference type="PANTHER" id="PTHR39156">
    <property type="entry name" value="RIBONUCLEASE M5"/>
    <property type="match status" value="1"/>
</dbReference>
<dbReference type="PANTHER" id="PTHR39156:SF1">
    <property type="entry name" value="RIBONUCLEASE M5"/>
    <property type="match status" value="1"/>
</dbReference>
<dbReference type="Pfam" id="PF13331">
    <property type="entry name" value="DUF4093"/>
    <property type="match status" value="1"/>
</dbReference>
<dbReference type="Pfam" id="PF01751">
    <property type="entry name" value="Toprim"/>
    <property type="match status" value="1"/>
</dbReference>
<dbReference type="SMART" id="SM00493">
    <property type="entry name" value="TOPRIM"/>
    <property type="match status" value="1"/>
</dbReference>
<dbReference type="SUPFAM" id="SSF110455">
    <property type="entry name" value="Toprim domain"/>
    <property type="match status" value="1"/>
</dbReference>
<dbReference type="PROSITE" id="PS50880">
    <property type="entry name" value="TOPRIM"/>
    <property type="match status" value="1"/>
</dbReference>
<organism>
    <name type="scientific">Bacillus anthracis</name>
    <dbReference type="NCBI Taxonomy" id="1392"/>
    <lineage>
        <taxon>Bacteria</taxon>
        <taxon>Bacillati</taxon>
        <taxon>Bacillota</taxon>
        <taxon>Bacilli</taxon>
        <taxon>Bacillales</taxon>
        <taxon>Bacillaceae</taxon>
        <taxon>Bacillus</taxon>
        <taxon>Bacillus cereus group</taxon>
    </lineage>
</organism>
<feature type="chain" id="PRO_0000416741" description="Ribonuclease M5">
    <location>
        <begin position="1"/>
        <end position="185"/>
    </location>
</feature>
<feature type="domain" description="Toprim" evidence="1">
    <location>
        <begin position="4"/>
        <end position="87"/>
    </location>
</feature>
<feature type="binding site" evidence="1">
    <location>
        <position position="10"/>
    </location>
    <ligand>
        <name>Mg(2+)</name>
        <dbReference type="ChEBI" id="CHEBI:18420"/>
        <label>1</label>
        <note>catalytic</note>
    </ligand>
</feature>
<feature type="binding site" evidence="1">
    <location>
        <position position="56"/>
    </location>
    <ligand>
        <name>Mg(2+)</name>
        <dbReference type="ChEBI" id="CHEBI:18420"/>
        <label>1</label>
        <note>catalytic</note>
    </ligand>
</feature>
<feature type="binding site" evidence="1">
    <location>
        <position position="56"/>
    </location>
    <ligand>
        <name>Mg(2+)</name>
        <dbReference type="ChEBI" id="CHEBI:18420"/>
        <label>2</label>
    </ligand>
</feature>
<feature type="binding site" evidence="1">
    <location>
        <position position="58"/>
    </location>
    <ligand>
        <name>Mg(2+)</name>
        <dbReference type="ChEBI" id="CHEBI:18420"/>
        <label>2</label>
    </ligand>
</feature>
<comment type="function">
    <text evidence="1">Required for correct processing of both the 5' and 3' ends of 5S rRNA precursor. Cleaves both sides of a double-stranded region yielding mature 5S rRNA in one step.</text>
</comment>
<comment type="catalytic activity">
    <reaction evidence="1">
        <text>Endonucleolytic cleavage of RNA, removing 21 and 42 nucleotides, respectively, from the 5'- and 3'-termini of a 5S-rRNA precursor.</text>
        <dbReference type="EC" id="3.1.26.8"/>
    </reaction>
</comment>
<comment type="cofactor">
    <cofactor evidence="1">
        <name>Mg(2+)</name>
        <dbReference type="ChEBI" id="CHEBI:18420"/>
    </cofactor>
    <text evidence="1">Binds two Mg(2+) per subunit.</text>
</comment>
<comment type="subcellular location">
    <subcellularLocation>
        <location evidence="1">Cytoplasm</location>
    </subcellularLocation>
</comment>
<comment type="similarity">
    <text evidence="1">Belongs to the ribonuclease M5 family.</text>
</comment>
<protein>
    <recommendedName>
        <fullName evidence="1">Ribonuclease M5</fullName>
        <ecNumber evidence="1">3.1.26.8</ecNumber>
    </recommendedName>
    <alternativeName>
        <fullName evidence="1">RNase M5</fullName>
    </alternativeName>
    <alternativeName>
        <fullName evidence="1">Ribosomal RNA terminal maturase M5</fullName>
    </alternativeName>
</protein>
<accession>Q81W01</accession>
<accession>E9RCM2</accession>
<accession>E9RCM3</accession>
<accession>Q6I504</accession>
<accession>Q6KYP8</accession>
<reference key="1">
    <citation type="journal article" date="2003" name="Nature">
        <title>The genome sequence of Bacillus anthracis Ames and comparison to closely related bacteria.</title>
        <authorList>
            <person name="Read T.D."/>
            <person name="Peterson S.N."/>
            <person name="Tourasse N.J."/>
            <person name="Baillie L.W."/>
            <person name="Paulsen I.T."/>
            <person name="Nelson K.E."/>
            <person name="Tettelin H."/>
            <person name="Fouts D.E."/>
            <person name="Eisen J.A."/>
            <person name="Gill S.R."/>
            <person name="Holtzapple E.K."/>
            <person name="Okstad O.A."/>
            <person name="Helgason E."/>
            <person name="Rilstone J."/>
            <person name="Wu M."/>
            <person name="Kolonay J.F."/>
            <person name="Beanan M.J."/>
            <person name="Dodson R.J."/>
            <person name="Brinkac L.M."/>
            <person name="Gwinn M.L."/>
            <person name="DeBoy R.T."/>
            <person name="Madpu R."/>
            <person name="Daugherty S.C."/>
            <person name="Durkin A.S."/>
            <person name="Haft D.H."/>
            <person name="Nelson W.C."/>
            <person name="Peterson J.D."/>
            <person name="Pop M."/>
            <person name="Khouri H.M."/>
            <person name="Radune D."/>
            <person name="Benton J.L."/>
            <person name="Mahamoud Y."/>
            <person name="Jiang L."/>
            <person name="Hance I.R."/>
            <person name="Weidman J.F."/>
            <person name="Berry K.J."/>
            <person name="Plaut R.D."/>
            <person name="Wolf A.M."/>
            <person name="Watkins K.L."/>
            <person name="Nierman W.C."/>
            <person name="Hazen A."/>
            <person name="Cline R.T."/>
            <person name="Redmond C."/>
            <person name="Thwaite J.E."/>
            <person name="White O."/>
            <person name="Salzberg S.L."/>
            <person name="Thomason B."/>
            <person name="Friedlander A.M."/>
            <person name="Koehler T.M."/>
            <person name="Hanna P.C."/>
            <person name="Kolstoe A.-B."/>
            <person name="Fraser C.M."/>
        </authorList>
    </citation>
    <scope>NUCLEOTIDE SEQUENCE [LARGE SCALE GENOMIC DNA]</scope>
    <source>
        <strain>Ames / isolate Porton</strain>
    </source>
</reference>
<reference key="2">
    <citation type="journal article" date="2009" name="J. Bacteriol.">
        <title>The complete genome sequence of Bacillus anthracis Ames 'Ancestor'.</title>
        <authorList>
            <person name="Ravel J."/>
            <person name="Jiang L."/>
            <person name="Stanley S.T."/>
            <person name="Wilson M.R."/>
            <person name="Decker R.S."/>
            <person name="Read T.D."/>
            <person name="Worsham P."/>
            <person name="Keim P.S."/>
            <person name="Salzberg S.L."/>
            <person name="Fraser-Liggett C.M."/>
            <person name="Rasko D.A."/>
        </authorList>
    </citation>
    <scope>NUCLEOTIDE SEQUENCE [LARGE SCALE GENOMIC DNA]</scope>
    <source>
        <strain>Ames ancestor</strain>
    </source>
</reference>
<reference key="3">
    <citation type="submission" date="2004-01" db="EMBL/GenBank/DDBJ databases">
        <title>Complete genome sequence of Bacillus anthracis Sterne.</title>
        <authorList>
            <person name="Brettin T.S."/>
            <person name="Bruce D."/>
            <person name="Challacombe J.F."/>
            <person name="Gilna P."/>
            <person name="Han C."/>
            <person name="Hill K."/>
            <person name="Hitchcock P."/>
            <person name="Jackson P."/>
            <person name="Keim P."/>
            <person name="Longmire J."/>
            <person name="Lucas S."/>
            <person name="Okinaka R."/>
            <person name="Richardson P."/>
            <person name="Rubin E."/>
            <person name="Tice H."/>
        </authorList>
    </citation>
    <scope>NUCLEOTIDE SEQUENCE [LARGE SCALE GENOMIC DNA]</scope>
    <source>
        <strain>Sterne</strain>
    </source>
</reference>
<sequence>MKIKEIIVVEGKDDTVAIKRAVDADTIETNGSAIGDHVIEQVKLALQKRGVIIFTDPDYPGERIRKIISDKVPGCKHAFLPKEEALAKRKKGVGIEHASNESIRRALENIHEEMEAYTSEISWSDLVDAGLVGGEMAKSRRERMGKLLKIGYTNAKQLHKRLQMFQVSKESFAEAYKQVIQEERK</sequence>